<keyword id="KW-0249">Electron transport</keyword>
<keyword id="KW-0472">Membrane</keyword>
<keyword id="KW-0496">Mitochondrion</keyword>
<keyword id="KW-0999">Mitochondrion inner membrane</keyword>
<keyword id="KW-0520">NAD</keyword>
<keyword id="KW-0679">Respiratory chain</keyword>
<keyword id="KW-1278">Translocase</keyword>
<keyword id="KW-0812">Transmembrane</keyword>
<keyword id="KW-1133">Transmembrane helix</keyword>
<keyword id="KW-0813">Transport</keyword>
<keyword id="KW-0830">Ubiquinone</keyword>
<sequence>MLKIIIPSIMLIPLTWFSNNKKVWINVTSYSFVINMIALVTLWQVNDITTNFSTMFSTDSLSSPLTMLTIWLLPLMLLASQKHIKNQTDFNKKMYISLLITLQVLLIMTFSANELIMFYILFEATLIPTLIIITRWGNQAERLNAGLYFLFYTLIGSIPLLIALISIQNTLGTLNIMLLSLDSSPQTPTWSSHILWLACIMAFMIKMP</sequence>
<evidence type="ECO:0000250" key="1">
    <source>
        <dbReference type="UniProtKB" id="P03905"/>
    </source>
</evidence>
<evidence type="ECO:0000250" key="2">
    <source>
        <dbReference type="UniProtKB" id="P03910"/>
    </source>
</evidence>
<evidence type="ECO:0000255" key="3"/>
<evidence type="ECO:0000305" key="4"/>
<proteinExistence type="inferred from homology"/>
<gene>
    <name type="primary">MT-ND4</name>
    <name type="synonym">MTND4</name>
    <name type="synonym">NADH4</name>
    <name type="synonym">ND4</name>
</gene>
<comment type="function">
    <text evidence="1">Core subunit of the mitochondrial membrane respiratory chain NADH dehydrogenase (Complex I) which catalyzes electron transfer from NADH through the respiratory chain, using ubiquinone as an electron acceptor. Essential for the catalytic activity and assembly of complex I.</text>
</comment>
<comment type="catalytic activity">
    <reaction evidence="1">
        <text>a ubiquinone + NADH + 5 H(+)(in) = a ubiquinol + NAD(+) + 4 H(+)(out)</text>
        <dbReference type="Rhea" id="RHEA:29091"/>
        <dbReference type="Rhea" id="RHEA-COMP:9565"/>
        <dbReference type="Rhea" id="RHEA-COMP:9566"/>
        <dbReference type="ChEBI" id="CHEBI:15378"/>
        <dbReference type="ChEBI" id="CHEBI:16389"/>
        <dbReference type="ChEBI" id="CHEBI:17976"/>
        <dbReference type="ChEBI" id="CHEBI:57540"/>
        <dbReference type="ChEBI" id="CHEBI:57945"/>
        <dbReference type="EC" id="7.1.1.2"/>
    </reaction>
</comment>
<comment type="subunit">
    <text evidence="2">Core subunit of respiratory chain NADH dehydrogenase (Complex I) which is composed of 45 different subunits.</text>
</comment>
<comment type="subcellular location">
    <subcellularLocation>
        <location evidence="2">Mitochondrion inner membrane</location>
        <topology evidence="3">Multi-pass membrane protein</topology>
    </subcellularLocation>
</comment>
<comment type="similarity">
    <text evidence="4">Belongs to the complex I subunit 4 family.</text>
</comment>
<protein>
    <recommendedName>
        <fullName>NADH-ubiquinone oxidoreductase chain 4</fullName>
        <ecNumber evidence="1">7.1.1.2</ecNumber>
    </recommendedName>
    <alternativeName>
        <fullName>NADH dehydrogenase subunit 4</fullName>
    </alternativeName>
</protein>
<feature type="chain" id="PRO_0000117968" description="NADH-ubiquinone oxidoreductase chain 4">
    <location>
        <begin position="1"/>
        <end position="208" status="greater than"/>
    </location>
</feature>
<feature type="transmembrane region" description="Helical" evidence="3">
    <location>
        <begin position="23"/>
        <end position="43"/>
    </location>
</feature>
<feature type="transmembrane region" description="Helical" evidence="3">
    <location>
        <begin position="60"/>
        <end position="80"/>
    </location>
</feature>
<feature type="transmembrane region" description="Helical" evidence="3">
    <location>
        <begin position="93"/>
        <end position="113"/>
    </location>
</feature>
<feature type="transmembrane region" description="Helical" evidence="3">
    <location>
        <begin position="114"/>
        <end position="134"/>
    </location>
</feature>
<feature type="transmembrane region" description="Helical" evidence="3">
    <location>
        <begin position="147"/>
        <end position="167"/>
    </location>
</feature>
<feature type="transmembrane region" description="Helical" evidence="3">
    <location>
        <begin position="188"/>
        <end position="208"/>
    </location>
</feature>
<feature type="non-terminal residue">
    <location>
        <position position="208"/>
    </location>
</feature>
<dbReference type="EC" id="7.1.1.2" evidence="1"/>
<dbReference type="EMBL" id="U83804">
    <property type="protein sequence ID" value="AAB87228.1"/>
    <property type="molecule type" value="Genomic_DNA"/>
</dbReference>
<dbReference type="SMR" id="O21515"/>
<dbReference type="GO" id="GO:0005743">
    <property type="term" value="C:mitochondrial inner membrane"/>
    <property type="evidence" value="ECO:0000250"/>
    <property type="project" value="UniProtKB"/>
</dbReference>
<dbReference type="GO" id="GO:0008137">
    <property type="term" value="F:NADH dehydrogenase (ubiquinone) activity"/>
    <property type="evidence" value="ECO:0000250"/>
    <property type="project" value="UniProtKB"/>
</dbReference>
<dbReference type="GO" id="GO:0048039">
    <property type="term" value="F:ubiquinone binding"/>
    <property type="evidence" value="ECO:0007669"/>
    <property type="project" value="TreeGrafter"/>
</dbReference>
<dbReference type="GO" id="GO:0015990">
    <property type="term" value="P:electron transport coupled proton transport"/>
    <property type="evidence" value="ECO:0007669"/>
    <property type="project" value="TreeGrafter"/>
</dbReference>
<dbReference type="GO" id="GO:0006120">
    <property type="term" value="P:mitochondrial electron transport, NADH to ubiquinone"/>
    <property type="evidence" value="ECO:0000250"/>
    <property type="project" value="UniProtKB"/>
</dbReference>
<dbReference type="GO" id="GO:0032981">
    <property type="term" value="P:mitochondrial respiratory chain complex I assembly"/>
    <property type="evidence" value="ECO:0000250"/>
    <property type="project" value="UniProtKB"/>
</dbReference>
<dbReference type="InterPro" id="IPR000260">
    <property type="entry name" value="NADH4_N"/>
</dbReference>
<dbReference type="InterPro" id="IPR003918">
    <property type="entry name" value="NADH_UbQ_OxRdtase"/>
</dbReference>
<dbReference type="InterPro" id="IPR001750">
    <property type="entry name" value="ND/Mrp_TM"/>
</dbReference>
<dbReference type="PANTHER" id="PTHR43507">
    <property type="entry name" value="NADH-UBIQUINONE OXIDOREDUCTASE CHAIN 4"/>
    <property type="match status" value="1"/>
</dbReference>
<dbReference type="PANTHER" id="PTHR43507:SF20">
    <property type="entry name" value="NADH-UBIQUINONE OXIDOREDUCTASE CHAIN 4"/>
    <property type="match status" value="1"/>
</dbReference>
<dbReference type="Pfam" id="PF01059">
    <property type="entry name" value="Oxidored_q5_N"/>
    <property type="match status" value="1"/>
</dbReference>
<dbReference type="Pfam" id="PF00361">
    <property type="entry name" value="Proton_antipo_M"/>
    <property type="match status" value="1"/>
</dbReference>
<dbReference type="PRINTS" id="PR01437">
    <property type="entry name" value="NUOXDRDTASE4"/>
</dbReference>
<organism>
    <name type="scientific">Phodopus sungorus</name>
    <name type="common">Striped hairy-footed hamster</name>
    <name type="synonym">Djungarian hamster</name>
    <dbReference type="NCBI Taxonomy" id="10044"/>
    <lineage>
        <taxon>Eukaryota</taxon>
        <taxon>Metazoa</taxon>
        <taxon>Chordata</taxon>
        <taxon>Craniata</taxon>
        <taxon>Vertebrata</taxon>
        <taxon>Euteleostomi</taxon>
        <taxon>Mammalia</taxon>
        <taxon>Eutheria</taxon>
        <taxon>Euarchontoglires</taxon>
        <taxon>Glires</taxon>
        <taxon>Rodentia</taxon>
        <taxon>Myomorpha</taxon>
        <taxon>Muroidea</taxon>
        <taxon>Cricetidae</taxon>
        <taxon>Cricetinae</taxon>
        <taxon>Phodopus</taxon>
    </lineage>
</organism>
<geneLocation type="mitochondrion"/>
<accession>O21515</accession>
<reference key="1">
    <citation type="journal article" date="1998" name="Mol. Biol. Evol.">
        <title>Molecular systematics and paleobiogeography of the South American sigmodontine rodents.</title>
        <authorList>
            <person name="Engel S.R."/>
            <person name="Hogan K.M."/>
            <person name="Taylor J.F."/>
            <person name="Davis S.K."/>
        </authorList>
    </citation>
    <scope>NUCLEOTIDE SEQUENCE [GENOMIC DNA]</scope>
</reference>
<name>NU4M_PHOSU</name>